<accession>A7ZR24</accession>
<dbReference type="EMBL" id="CP000800">
    <property type="protein sequence ID" value="ABV17570.1"/>
    <property type="molecule type" value="Genomic_DNA"/>
</dbReference>
<dbReference type="RefSeq" id="WP_000828351.1">
    <property type="nucleotide sequence ID" value="NC_009801.1"/>
</dbReference>
<dbReference type="SMR" id="A7ZR24"/>
<dbReference type="GeneID" id="93779084"/>
<dbReference type="KEGG" id="ecw:EcE24377A_3243"/>
<dbReference type="HOGENOM" id="CLU_063829_0_0_6"/>
<dbReference type="Proteomes" id="UP000001122">
    <property type="component" value="Chromosome"/>
</dbReference>
<dbReference type="GO" id="GO:0003677">
    <property type="term" value="F:DNA binding"/>
    <property type="evidence" value="ECO:0007669"/>
    <property type="project" value="UniProtKB-UniRule"/>
</dbReference>
<dbReference type="GO" id="GO:0003700">
    <property type="term" value="F:DNA-binding transcription factor activity"/>
    <property type="evidence" value="ECO:0007669"/>
    <property type="project" value="UniProtKB-UniRule"/>
</dbReference>
<dbReference type="CDD" id="cd08428">
    <property type="entry name" value="PBP2_IciA_ArgP"/>
    <property type="match status" value="1"/>
</dbReference>
<dbReference type="FunFam" id="1.10.10.10:FF:000061">
    <property type="entry name" value="HTH-type transcriptional regulator ArgP"/>
    <property type="match status" value="1"/>
</dbReference>
<dbReference type="FunFam" id="3.40.190.290:FF:000002">
    <property type="entry name" value="HTH-type transcriptional regulator ArgP"/>
    <property type="match status" value="1"/>
</dbReference>
<dbReference type="Gene3D" id="3.40.190.290">
    <property type="match status" value="1"/>
</dbReference>
<dbReference type="Gene3D" id="1.10.10.10">
    <property type="entry name" value="Winged helix-like DNA-binding domain superfamily/Winged helix DNA-binding domain"/>
    <property type="match status" value="1"/>
</dbReference>
<dbReference type="HAMAP" id="MF_00513">
    <property type="entry name" value="HTH_type_ArgP"/>
    <property type="match status" value="1"/>
</dbReference>
<dbReference type="InterPro" id="IPR017685">
    <property type="entry name" value="ArgP"/>
</dbReference>
<dbReference type="InterPro" id="IPR023490">
    <property type="entry name" value="ArgP_gammaproteobact"/>
</dbReference>
<dbReference type="InterPro" id="IPR050176">
    <property type="entry name" value="LTTR"/>
</dbReference>
<dbReference type="InterPro" id="IPR005119">
    <property type="entry name" value="LysR_subst-bd"/>
</dbReference>
<dbReference type="InterPro" id="IPR000847">
    <property type="entry name" value="Tscrpt_reg_HTH_LysR"/>
</dbReference>
<dbReference type="InterPro" id="IPR036388">
    <property type="entry name" value="WH-like_DNA-bd_sf"/>
</dbReference>
<dbReference type="InterPro" id="IPR036390">
    <property type="entry name" value="WH_DNA-bd_sf"/>
</dbReference>
<dbReference type="NCBIfam" id="TIGR03298">
    <property type="entry name" value="argP"/>
    <property type="match status" value="1"/>
</dbReference>
<dbReference type="NCBIfam" id="NF002964">
    <property type="entry name" value="PRK03635.1"/>
    <property type="match status" value="1"/>
</dbReference>
<dbReference type="NCBIfam" id="NF009888">
    <property type="entry name" value="PRK13348.1"/>
    <property type="match status" value="1"/>
</dbReference>
<dbReference type="PANTHER" id="PTHR30579:SF2">
    <property type="entry name" value="HTH-TYPE TRANSCRIPTIONAL REGULATOR ARGP"/>
    <property type="match status" value="1"/>
</dbReference>
<dbReference type="PANTHER" id="PTHR30579">
    <property type="entry name" value="TRANSCRIPTIONAL REGULATOR"/>
    <property type="match status" value="1"/>
</dbReference>
<dbReference type="Pfam" id="PF00126">
    <property type="entry name" value="HTH_1"/>
    <property type="match status" value="1"/>
</dbReference>
<dbReference type="Pfam" id="PF03466">
    <property type="entry name" value="LysR_substrate"/>
    <property type="match status" value="1"/>
</dbReference>
<dbReference type="PRINTS" id="PR00039">
    <property type="entry name" value="HTHLYSR"/>
</dbReference>
<dbReference type="SUPFAM" id="SSF53850">
    <property type="entry name" value="Periplasmic binding protein-like II"/>
    <property type="match status" value="1"/>
</dbReference>
<dbReference type="SUPFAM" id="SSF46785">
    <property type="entry name" value="Winged helix' DNA-binding domain"/>
    <property type="match status" value="1"/>
</dbReference>
<dbReference type="PROSITE" id="PS50931">
    <property type="entry name" value="HTH_LYSR"/>
    <property type="match status" value="1"/>
</dbReference>
<protein>
    <recommendedName>
        <fullName evidence="1">HTH-type transcriptional regulator ArgP</fullName>
    </recommendedName>
</protein>
<feature type="chain" id="PRO_1000060875" description="HTH-type transcriptional regulator ArgP">
    <location>
        <begin position="1"/>
        <end position="297"/>
    </location>
</feature>
<feature type="domain" description="HTH lysR-type" evidence="1">
    <location>
        <begin position="4"/>
        <end position="60"/>
    </location>
</feature>
<feature type="DNA-binding region" description="H-T-H motif" evidence="1">
    <location>
        <begin position="21"/>
        <end position="40"/>
    </location>
</feature>
<comment type="function">
    <text evidence="1">Controls the transcription of genes involved in arginine and lysine metabolism.</text>
</comment>
<comment type="subunit">
    <text evidence="1">Homodimer.</text>
</comment>
<comment type="similarity">
    <text evidence="2">Belongs to the LysR transcriptional regulatory family.</text>
</comment>
<keyword id="KW-0238">DNA-binding</keyword>
<keyword id="KW-1185">Reference proteome</keyword>
<keyword id="KW-0804">Transcription</keyword>
<keyword id="KW-0805">Transcription regulation</keyword>
<sequence length="297" mass="33472">MKRPDYRTLQALDAVIRERGFERAAQKLCITQSAVSQRIKQLENMFGQPLLVRTVPPRPTEQGQKLLALLRQVELLEEEWLGDEQTGSTPLLLSLAVNADSLATWLLPALAPVLADSPIRLNLQVEDETRTQERLRRGEVVGAVSIQHQALPSCLVDKLGALDYLFVSSKPFAEKYFPNGVTRSALLKAPVVAFDHLDDMHQAFLQQNFDLPPGSVPCHIVNSSEAFVQLARQGTTCCMIPHLQIEKELASGELIDLTPGLFQRRMLYWHRFAPESRMMRKVTDALLDYGHKVLRQD</sequence>
<gene>
    <name evidence="1" type="primary">argP</name>
    <name type="synonym">iciA</name>
    <name type="ordered locus">EcE24377A_3243</name>
</gene>
<evidence type="ECO:0000255" key="1">
    <source>
        <dbReference type="HAMAP-Rule" id="MF_00513"/>
    </source>
</evidence>
<evidence type="ECO:0000305" key="2"/>
<organism>
    <name type="scientific">Escherichia coli O139:H28 (strain E24377A / ETEC)</name>
    <dbReference type="NCBI Taxonomy" id="331111"/>
    <lineage>
        <taxon>Bacteria</taxon>
        <taxon>Pseudomonadati</taxon>
        <taxon>Pseudomonadota</taxon>
        <taxon>Gammaproteobacteria</taxon>
        <taxon>Enterobacterales</taxon>
        <taxon>Enterobacteriaceae</taxon>
        <taxon>Escherichia</taxon>
    </lineage>
</organism>
<proteinExistence type="inferred from homology"/>
<reference key="1">
    <citation type="journal article" date="2008" name="J. Bacteriol.">
        <title>The pangenome structure of Escherichia coli: comparative genomic analysis of E. coli commensal and pathogenic isolates.</title>
        <authorList>
            <person name="Rasko D.A."/>
            <person name="Rosovitz M.J."/>
            <person name="Myers G.S.A."/>
            <person name="Mongodin E.F."/>
            <person name="Fricke W.F."/>
            <person name="Gajer P."/>
            <person name="Crabtree J."/>
            <person name="Sebaihia M."/>
            <person name="Thomson N.R."/>
            <person name="Chaudhuri R."/>
            <person name="Henderson I.R."/>
            <person name="Sperandio V."/>
            <person name="Ravel J."/>
        </authorList>
    </citation>
    <scope>NUCLEOTIDE SEQUENCE [LARGE SCALE GENOMIC DNA]</scope>
    <source>
        <strain>E24377A / ETEC</strain>
    </source>
</reference>
<name>ARGP_ECO24</name>